<comment type="function">
    <text evidence="1">Part of a complex that catalyzes the formation of methyl-coenzyme M and tetrahydromethanopterin from coenzyme M and methyl-tetrahydromethanopterin. This is an energy-conserving, sodium-ion translocating step.</text>
</comment>
<comment type="catalytic activity">
    <reaction>
        <text>5-methyl-5,6,7,8-tetrahydromethanopterin + coenzyme M + 2 Na(+)(in) = 5,6,7,8-tetrahydromethanopterin + methyl-coenzyme M + 2 Na(+)(out)</text>
        <dbReference type="Rhea" id="RHEA:53492"/>
        <dbReference type="ChEBI" id="CHEBI:29101"/>
        <dbReference type="ChEBI" id="CHEBI:58103"/>
        <dbReference type="ChEBI" id="CHEBI:58116"/>
        <dbReference type="ChEBI" id="CHEBI:58286"/>
        <dbReference type="ChEBI" id="CHEBI:58319"/>
        <dbReference type="EC" id="7.2.1.4"/>
    </reaction>
</comment>
<comment type="pathway">
    <text>One-carbon metabolism; methanogenesis from CO(2); methyl-coenzyme M from 5,10-methylene-5,6,7,8-tetrahydromethanopterin: step 2/2.</text>
</comment>
<comment type="subunit">
    <text evidence="1">The complex is composed of 8 subunits; MtrA, MtrB, MtrC, MtrD, MtrE, MtrF, MtrG and MtrH.</text>
</comment>
<comment type="subcellular location">
    <subcellularLocation>
        <location evidence="3">Cell membrane</location>
        <topology evidence="3">Multi-pass membrane protein</topology>
    </subcellularLocation>
</comment>
<comment type="similarity">
    <text evidence="3">Belongs to the MtrC family.</text>
</comment>
<evidence type="ECO:0000250" key="1"/>
<evidence type="ECO:0000255" key="2"/>
<evidence type="ECO:0000305" key="3"/>
<dbReference type="EC" id="7.2.1.4"/>
<dbReference type="EMBL" id="Y14428">
    <property type="protein sequence ID" value="CAA74769.1"/>
    <property type="molecule type" value="Genomic_DNA"/>
</dbReference>
<dbReference type="EMBL" id="AE009439">
    <property type="protein sequence ID" value="AAM01873.1"/>
    <property type="molecule type" value="Genomic_DNA"/>
</dbReference>
<dbReference type="RefSeq" id="WP_011019028.1">
    <property type="nucleotide sequence ID" value="NC_003551.1"/>
</dbReference>
<dbReference type="SMR" id="O32865"/>
<dbReference type="FunCoup" id="O32865">
    <property type="interactions" value="63"/>
</dbReference>
<dbReference type="STRING" id="190192.MK0658"/>
<dbReference type="PaxDb" id="190192-MK0658"/>
<dbReference type="EnsemblBacteria" id="AAM01873">
    <property type="protein sequence ID" value="AAM01873"/>
    <property type="gene ID" value="MK0658"/>
</dbReference>
<dbReference type="GeneID" id="1476759"/>
<dbReference type="KEGG" id="mka:MK0658"/>
<dbReference type="PATRIC" id="fig|190192.8.peg.697"/>
<dbReference type="HOGENOM" id="CLU_092286_0_0_2"/>
<dbReference type="InParanoid" id="O32865"/>
<dbReference type="OrthoDB" id="60591at2157"/>
<dbReference type="UniPathway" id="UPA00640">
    <property type="reaction ID" value="UER00698"/>
</dbReference>
<dbReference type="Proteomes" id="UP000001826">
    <property type="component" value="Chromosome"/>
</dbReference>
<dbReference type="GO" id="GO:0005886">
    <property type="term" value="C:plasma membrane"/>
    <property type="evidence" value="ECO:0007669"/>
    <property type="project" value="UniProtKB-SubCell"/>
</dbReference>
<dbReference type="GO" id="GO:0030269">
    <property type="term" value="F:tetrahydromethanopterin S-methyltransferase activity"/>
    <property type="evidence" value="ECO:0007669"/>
    <property type="project" value="UniProtKB-UniRule"/>
</dbReference>
<dbReference type="GO" id="GO:0019386">
    <property type="term" value="P:methanogenesis, from carbon dioxide"/>
    <property type="evidence" value="ECO:0007669"/>
    <property type="project" value="UniProtKB-UniRule"/>
</dbReference>
<dbReference type="GO" id="GO:0032259">
    <property type="term" value="P:methylation"/>
    <property type="evidence" value="ECO:0007669"/>
    <property type="project" value="UniProtKB-KW"/>
</dbReference>
<dbReference type="GO" id="GO:0006730">
    <property type="term" value="P:one-carbon metabolic process"/>
    <property type="evidence" value="ECO:0007669"/>
    <property type="project" value="UniProtKB-UniRule"/>
</dbReference>
<dbReference type="HAMAP" id="MF_01096">
    <property type="entry name" value="MtrC"/>
    <property type="match status" value="1"/>
</dbReference>
<dbReference type="InterPro" id="IPR005865">
    <property type="entry name" value="THM_MeTrfase_su_C"/>
</dbReference>
<dbReference type="NCBIfam" id="TIGR01148">
    <property type="entry name" value="mtrC"/>
    <property type="match status" value="1"/>
</dbReference>
<dbReference type="Pfam" id="PF04211">
    <property type="entry name" value="MtrC"/>
    <property type="match status" value="1"/>
</dbReference>
<dbReference type="PIRSF" id="PIRSF006530">
    <property type="entry name" value="MtrC"/>
    <property type="match status" value="1"/>
</dbReference>
<protein>
    <recommendedName>
        <fullName>Tetrahydromethanopterin S-methyltransferase subunit C</fullName>
        <ecNumber>7.2.1.4</ecNumber>
    </recommendedName>
    <alternativeName>
        <fullName>N5-methyltetrahydromethanopterin--coenzyme M methyltransferase subunit C</fullName>
    </alternativeName>
</protein>
<accession>O32865</accession>
<sequence>MILRTLLISAVAPGGEEEEVEVAVAISPLKLMTAGLICGILGTAFAWVHPLIPALAVIPVVVWGADAVRRVAGYGLGTGVPSIGFMGLGGGSVAAILAAALSGNTVPAWAAAIIGTVIGAVVGALLGVLDRRVIKMKIPVMERCSTEIVASGTLALICLMAAVAGDFTWSAVYSKVIATGLIAVLWAICAISLLHPFNACLGPSETQERTLWLGAECGSLCTVVAGLATANPVVLLAGAAAWLITFWKFWELTKRDAADVVWTGIVPKGE</sequence>
<feature type="chain" id="PRO_0000147523" description="Tetrahydromethanopterin S-methyltransferase subunit C">
    <location>
        <begin position="1"/>
        <end position="270"/>
    </location>
</feature>
<feature type="transmembrane region" description="Helical" evidence="2">
    <location>
        <begin position="22"/>
        <end position="42"/>
    </location>
</feature>
<feature type="transmembrane region" description="Helical" evidence="2">
    <location>
        <begin position="45"/>
        <end position="65"/>
    </location>
</feature>
<feature type="transmembrane region" description="Helical" evidence="2">
    <location>
        <begin position="83"/>
        <end position="103"/>
    </location>
</feature>
<feature type="transmembrane region" description="Helical" evidence="2">
    <location>
        <begin position="109"/>
        <end position="129"/>
    </location>
</feature>
<feature type="transmembrane region" description="Helical" evidence="2">
    <location>
        <begin position="148"/>
        <end position="168"/>
    </location>
</feature>
<feature type="transmembrane region" description="Helical" evidence="2">
    <location>
        <begin position="177"/>
        <end position="197"/>
    </location>
</feature>
<feature type="transmembrane region" description="Helical" evidence="2">
    <location>
        <begin position="224"/>
        <end position="244"/>
    </location>
</feature>
<name>MTRC_METKA</name>
<reference key="1">
    <citation type="journal article" date="1997" name="Eur. J. Biochem.">
        <title>Identification of the active site histidine in the corrinoid protein MtrA of the energy-conserving methyltransferase complex from Methanobacterium thermoautotrophicum.</title>
        <authorList>
            <person name="Harms U."/>
            <person name="Thauer R.K."/>
        </authorList>
    </citation>
    <scope>NUCLEOTIDE SEQUENCE [GENOMIC DNA]</scope>
</reference>
<reference key="2">
    <citation type="journal article" date="2002" name="Proc. Natl. Acad. Sci. U.S.A.">
        <title>The complete genome of hyperthermophile Methanopyrus kandleri AV19 and monophyly of archaeal methanogens.</title>
        <authorList>
            <person name="Slesarev A.I."/>
            <person name="Mezhevaya K.V."/>
            <person name="Makarova K.S."/>
            <person name="Polushin N.N."/>
            <person name="Shcherbinina O.V."/>
            <person name="Shakhova V.V."/>
            <person name="Belova G.I."/>
            <person name="Aravind L."/>
            <person name="Natale D.A."/>
            <person name="Rogozin I.B."/>
            <person name="Tatusov R.L."/>
            <person name="Wolf Y.I."/>
            <person name="Stetter K.O."/>
            <person name="Malykh A.G."/>
            <person name="Koonin E.V."/>
            <person name="Kozyavkin S.A."/>
        </authorList>
    </citation>
    <scope>NUCLEOTIDE SEQUENCE [LARGE SCALE GENOMIC DNA]</scope>
    <source>
        <strain>AV19 / DSM 6324 / JCM 9639 / NBRC 100938</strain>
    </source>
</reference>
<proteinExistence type="inferred from homology"/>
<keyword id="KW-1003">Cell membrane</keyword>
<keyword id="KW-0472">Membrane</keyword>
<keyword id="KW-0484">Methanogenesis</keyword>
<keyword id="KW-0489">Methyltransferase</keyword>
<keyword id="KW-0554">One-carbon metabolism</keyword>
<keyword id="KW-1185">Reference proteome</keyword>
<keyword id="KW-0808">Transferase</keyword>
<keyword id="KW-1278">Translocase</keyword>
<keyword id="KW-0812">Transmembrane</keyword>
<keyword id="KW-1133">Transmembrane helix</keyword>
<gene>
    <name type="primary">mtrC</name>
    <name type="ordered locus">MK0658</name>
</gene>
<organism>
    <name type="scientific">Methanopyrus kandleri (strain AV19 / DSM 6324 / JCM 9639 / NBRC 100938)</name>
    <dbReference type="NCBI Taxonomy" id="190192"/>
    <lineage>
        <taxon>Archaea</taxon>
        <taxon>Methanobacteriati</taxon>
        <taxon>Methanobacteriota</taxon>
        <taxon>Methanomada group</taxon>
        <taxon>Methanopyri</taxon>
        <taxon>Methanopyrales</taxon>
        <taxon>Methanopyraceae</taxon>
        <taxon>Methanopyrus</taxon>
    </lineage>
</organism>